<name>SECB_ENT38</name>
<reference key="1">
    <citation type="journal article" date="2010" name="PLoS Genet.">
        <title>Genome sequence of the plant growth promoting endophytic bacterium Enterobacter sp. 638.</title>
        <authorList>
            <person name="Taghavi S."/>
            <person name="van der Lelie D."/>
            <person name="Hoffman A."/>
            <person name="Zhang Y.B."/>
            <person name="Walla M.D."/>
            <person name="Vangronsveld J."/>
            <person name="Newman L."/>
            <person name="Monchy S."/>
        </authorList>
    </citation>
    <scope>NUCLEOTIDE SEQUENCE [LARGE SCALE GENOMIC DNA]</scope>
    <source>
        <strain>638</strain>
    </source>
</reference>
<protein>
    <recommendedName>
        <fullName evidence="1">Protein-export protein SecB</fullName>
    </recommendedName>
</protein>
<accession>A4W536</accession>
<feature type="chain" id="PRO_1000062475" description="Protein-export protein SecB">
    <location>
        <begin position="1"/>
        <end position="155"/>
    </location>
</feature>
<sequence length="155" mass="17225">MSEQNNNEMSFQIQRIYTKDVSFEAPNAPHVFQKDWQPEVKLDLDTASTQLADDVYEVVLRVTVTASLGEETAFLCEVQQGGIFSVGGIEGNQLAHCLGAYCPNILFPYARECITSLVSRGTFPQLNLAPVNFDALFMNYLQQQAGEGTEEHQDA</sequence>
<comment type="function">
    <text evidence="1">One of the proteins required for the normal export of preproteins out of the cell cytoplasm. It is a molecular chaperone that binds to a subset of precursor proteins, maintaining them in a translocation-competent state. It also specifically binds to its receptor SecA.</text>
</comment>
<comment type="subunit">
    <text evidence="1">Homotetramer, a dimer of dimers. One homotetramer interacts with 1 SecA dimer.</text>
</comment>
<comment type="subcellular location">
    <subcellularLocation>
        <location evidence="1">Cytoplasm</location>
    </subcellularLocation>
</comment>
<comment type="similarity">
    <text evidence="1">Belongs to the SecB family.</text>
</comment>
<organism>
    <name type="scientific">Enterobacter sp. (strain 638)</name>
    <dbReference type="NCBI Taxonomy" id="399742"/>
    <lineage>
        <taxon>Bacteria</taxon>
        <taxon>Pseudomonadati</taxon>
        <taxon>Pseudomonadota</taxon>
        <taxon>Gammaproteobacteria</taxon>
        <taxon>Enterobacterales</taxon>
        <taxon>Enterobacteriaceae</taxon>
        <taxon>Enterobacter</taxon>
    </lineage>
</organism>
<gene>
    <name evidence="1" type="primary">secB</name>
    <name type="ordered locus">Ent638_0126</name>
</gene>
<dbReference type="EMBL" id="CP000653">
    <property type="protein sequence ID" value="ABP58816.1"/>
    <property type="molecule type" value="Genomic_DNA"/>
</dbReference>
<dbReference type="RefSeq" id="WP_011915392.1">
    <property type="nucleotide sequence ID" value="NC_009436.1"/>
</dbReference>
<dbReference type="SMR" id="A4W536"/>
<dbReference type="STRING" id="399742.Ent638_0126"/>
<dbReference type="KEGG" id="ent:Ent638_0126"/>
<dbReference type="eggNOG" id="COG1952">
    <property type="taxonomic scope" value="Bacteria"/>
</dbReference>
<dbReference type="HOGENOM" id="CLU_111574_1_0_6"/>
<dbReference type="OrthoDB" id="9795145at2"/>
<dbReference type="Proteomes" id="UP000000230">
    <property type="component" value="Chromosome"/>
</dbReference>
<dbReference type="GO" id="GO:0005737">
    <property type="term" value="C:cytoplasm"/>
    <property type="evidence" value="ECO:0007669"/>
    <property type="project" value="UniProtKB-SubCell"/>
</dbReference>
<dbReference type="GO" id="GO:0051082">
    <property type="term" value="F:unfolded protein binding"/>
    <property type="evidence" value="ECO:0007669"/>
    <property type="project" value="InterPro"/>
</dbReference>
<dbReference type="GO" id="GO:0006457">
    <property type="term" value="P:protein folding"/>
    <property type="evidence" value="ECO:0007669"/>
    <property type="project" value="UniProtKB-UniRule"/>
</dbReference>
<dbReference type="GO" id="GO:0051262">
    <property type="term" value="P:protein tetramerization"/>
    <property type="evidence" value="ECO:0007669"/>
    <property type="project" value="InterPro"/>
</dbReference>
<dbReference type="GO" id="GO:0015031">
    <property type="term" value="P:protein transport"/>
    <property type="evidence" value="ECO:0007669"/>
    <property type="project" value="UniProtKB-UniRule"/>
</dbReference>
<dbReference type="CDD" id="cd00557">
    <property type="entry name" value="Translocase_SecB"/>
    <property type="match status" value="1"/>
</dbReference>
<dbReference type="FunFam" id="3.10.420.10:FF:000001">
    <property type="entry name" value="Protein-export chaperone SecB"/>
    <property type="match status" value="1"/>
</dbReference>
<dbReference type="Gene3D" id="3.10.420.10">
    <property type="entry name" value="SecB-like"/>
    <property type="match status" value="1"/>
</dbReference>
<dbReference type="HAMAP" id="MF_00821">
    <property type="entry name" value="SecB"/>
    <property type="match status" value="1"/>
</dbReference>
<dbReference type="InterPro" id="IPR003708">
    <property type="entry name" value="SecB"/>
</dbReference>
<dbReference type="InterPro" id="IPR035958">
    <property type="entry name" value="SecB-like_sf"/>
</dbReference>
<dbReference type="NCBIfam" id="NF004390">
    <property type="entry name" value="PRK05751.1-1"/>
    <property type="match status" value="1"/>
</dbReference>
<dbReference type="NCBIfam" id="NF004393">
    <property type="entry name" value="PRK05751.1-4"/>
    <property type="match status" value="1"/>
</dbReference>
<dbReference type="NCBIfam" id="TIGR00809">
    <property type="entry name" value="secB"/>
    <property type="match status" value="1"/>
</dbReference>
<dbReference type="PANTHER" id="PTHR36918">
    <property type="match status" value="1"/>
</dbReference>
<dbReference type="PANTHER" id="PTHR36918:SF1">
    <property type="entry name" value="PROTEIN-EXPORT PROTEIN SECB"/>
    <property type="match status" value="1"/>
</dbReference>
<dbReference type="Pfam" id="PF02556">
    <property type="entry name" value="SecB"/>
    <property type="match status" value="1"/>
</dbReference>
<dbReference type="PRINTS" id="PR01594">
    <property type="entry name" value="SECBCHAPRONE"/>
</dbReference>
<dbReference type="SUPFAM" id="SSF54611">
    <property type="entry name" value="SecB-like"/>
    <property type="match status" value="1"/>
</dbReference>
<evidence type="ECO:0000255" key="1">
    <source>
        <dbReference type="HAMAP-Rule" id="MF_00821"/>
    </source>
</evidence>
<keyword id="KW-0143">Chaperone</keyword>
<keyword id="KW-0963">Cytoplasm</keyword>
<keyword id="KW-0653">Protein transport</keyword>
<keyword id="KW-0811">Translocation</keyword>
<keyword id="KW-0813">Transport</keyword>
<proteinExistence type="inferred from homology"/>